<comment type="function">
    <text evidence="1">Catalyzes the isomerization between 2-isopropylmalate and 3-isopropylmalate, via the formation of 2-isopropylmaleate.</text>
</comment>
<comment type="catalytic activity">
    <reaction evidence="1">
        <text>(2R,3S)-3-isopropylmalate = (2S)-2-isopropylmalate</text>
        <dbReference type="Rhea" id="RHEA:32287"/>
        <dbReference type="ChEBI" id="CHEBI:1178"/>
        <dbReference type="ChEBI" id="CHEBI:35121"/>
        <dbReference type="EC" id="4.2.1.33"/>
    </reaction>
</comment>
<comment type="pathway">
    <text evidence="1">Amino-acid biosynthesis; L-leucine biosynthesis; L-leucine from 3-methyl-2-oxobutanoate: step 2/4.</text>
</comment>
<comment type="subunit">
    <text evidence="1">Heterodimer of LeuC and LeuD.</text>
</comment>
<comment type="similarity">
    <text evidence="1">Belongs to the LeuD family. LeuD type 1 subfamily.</text>
</comment>
<evidence type="ECO:0000255" key="1">
    <source>
        <dbReference type="HAMAP-Rule" id="MF_01031"/>
    </source>
</evidence>
<protein>
    <recommendedName>
        <fullName evidence="1">3-isopropylmalate dehydratase small subunit</fullName>
        <ecNumber evidence="1">4.2.1.33</ecNumber>
    </recommendedName>
    <alternativeName>
        <fullName evidence="1">Alpha-IPM isomerase</fullName>
        <shortName evidence="1">IPMI</shortName>
    </alternativeName>
    <alternativeName>
        <fullName evidence="1">Isopropylmalate isomerase</fullName>
    </alternativeName>
</protein>
<accession>A1U0X9</accession>
<proteinExistence type="inferred from homology"/>
<organism>
    <name type="scientific">Marinobacter nauticus (strain ATCC 700491 / DSM 11845 / VT8)</name>
    <name type="common">Marinobacter aquaeolei</name>
    <dbReference type="NCBI Taxonomy" id="351348"/>
    <lineage>
        <taxon>Bacteria</taxon>
        <taxon>Pseudomonadati</taxon>
        <taxon>Pseudomonadota</taxon>
        <taxon>Gammaproteobacteria</taxon>
        <taxon>Pseudomonadales</taxon>
        <taxon>Marinobacteraceae</taxon>
        <taxon>Marinobacter</taxon>
    </lineage>
</organism>
<feature type="chain" id="PRO_1000063784" description="3-isopropylmalate dehydratase small subunit">
    <location>
        <begin position="1"/>
        <end position="215"/>
    </location>
</feature>
<sequence length="215" mass="24499">MRAFTQHQGTVAPMDRSNVDTDMIIPKQFLKSIKRTGFGPNLFDELRYLDEGKPDQDCSNRPLNPDFVLNQDRYKNASVLLARTNFGCGSSREHAPWALDDFGFRVIIAPSFADIFYNNCFKNGLLPIVLDEKVVDRLFRETEENEGYQLTVDLEAKTVTTPGGESFSFEVDDFRRHCLLNGLDDIGVTLEDADTIRAYEESRRKTAPWLFNTGN</sequence>
<name>LEUD_MARN8</name>
<gene>
    <name evidence="1" type="primary">leuD</name>
    <name type="ordered locus">Maqu_1564</name>
</gene>
<keyword id="KW-0028">Amino-acid biosynthesis</keyword>
<keyword id="KW-0100">Branched-chain amino acid biosynthesis</keyword>
<keyword id="KW-0432">Leucine biosynthesis</keyword>
<keyword id="KW-0456">Lyase</keyword>
<dbReference type="EC" id="4.2.1.33" evidence="1"/>
<dbReference type="EMBL" id="CP000514">
    <property type="protein sequence ID" value="ABM18648.1"/>
    <property type="molecule type" value="Genomic_DNA"/>
</dbReference>
<dbReference type="RefSeq" id="WP_011785050.1">
    <property type="nucleotide sequence ID" value="NC_008740.1"/>
</dbReference>
<dbReference type="SMR" id="A1U0X9"/>
<dbReference type="STRING" id="351348.Maqu_1564"/>
<dbReference type="KEGG" id="maq:Maqu_1564"/>
<dbReference type="eggNOG" id="COG0066">
    <property type="taxonomic scope" value="Bacteria"/>
</dbReference>
<dbReference type="HOGENOM" id="CLU_081378_0_3_6"/>
<dbReference type="OrthoDB" id="9777465at2"/>
<dbReference type="UniPathway" id="UPA00048">
    <property type="reaction ID" value="UER00071"/>
</dbReference>
<dbReference type="Proteomes" id="UP000000998">
    <property type="component" value="Chromosome"/>
</dbReference>
<dbReference type="GO" id="GO:0009316">
    <property type="term" value="C:3-isopropylmalate dehydratase complex"/>
    <property type="evidence" value="ECO:0007669"/>
    <property type="project" value="InterPro"/>
</dbReference>
<dbReference type="GO" id="GO:0003861">
    <property type="term" value="F:3-isopropylmalate dehydratase activity"/>
    <property type="evidence" value="ECO:0007669"/>
    <property type="project" value="UniProtKB-UniRule"/>
</dbReference>
<dbReference type="GO" id="GO:0009098">
    <property type="term" value="P:L-leucine biosynthetic process"/>
    <property type="evidence" value="ECO:0007669"/>
    <property type="project" value="UniProtKB-UniRule"/>
</dbReference>
<dbReference type="CDD" id="cd01577">
    <property type="entry name" value="IPMI_Swivel"/>
    <property type="match status" value="1"/>
</dbReference>
<dbReference type="FunFam" id="3.20.19.10:FF:000003">
    <property type="entry name" value="3-isopropylmalate dehydratase small subunit"/>
    <property type="match status" value="1"/>
</dbReference>
<dbReference type="Gene3D" id="3.20.19.10">
    <property type="entry name" value="Aconitase, domain 4"/>
    <property type="match status" value="1"/>
</dbReference>
<dbReference type="HAMAP" id="MF_01031">
    <property type="entry name" value="LeuD_type1"/>
    <property type="match status" value="1"/>
</dbReference>
<dbReference type="InterPro" id="IPR004431">
    <property type="entry name" value="3-IsopropMal_deHydase_ssu"/>
</dbReference>
<dbReference type="InterPro" id="IPR015928">
    <property type="entry name" value="Aconitase/3IPM_dehydase_swvl"/>
</dbReference>
<dbReference type="InterPro" id="IPR000573">
    <property type="entry name" value="AconitaseA/IPMdHydase_ssu_swvl"/>
</dbReference>
<dbReference type="InterPro" id="IPR033940">
    <property type="entry name" value="IPMI_Swivel"/>
</dbReference>
<dbReference type="InterPro" id="IPR050075">
    <property type="entry name" value="LeuD"/>
</dbReference>
<dbReference type="NCBIfam" id="TIGR00171">
    <property type="entry name" value="leuD"/>
    <property type="match status" value="1"/>
</dbReference>
<dbReference type="NCBIfam" id="NF002458">
    <property type="entry name" value="PRK01641.1"/>
    <property type="match status" value="1"/>
</dbReference>
<dbReference type="PANTHER" id="PTHR43345:SF5">
    <property type="entry name" value="3-ISOPROPYLMALATE DEHYDRATASE SMALL SUBUNIT"/>
    <property type="match status" value="1"/>
</dbReference>
<dbReference type="PANTHER" id="PTHR43345">
    <property type="entry name" value="3-ISOPROPYLMALATE DEHYDRATASE SMALL SUBUNIT 2-RELATED-RELATED"/>
    <property type="match status" value="1"/>
</dbReference>
<dbReference type="Pfam" id="PF00694">
    <property type="entry name" value="Aconitase_C"/>
    <property type="match status" value="1"/>
</dbReference>
<dbReference type="SUPFAM" id="SSF52016">
    <property type="entry name" value="LeuD/IlvD-like"/>
    <property type="match status" value="1"/>
</dbReference>
<reference key="1">
    <citation type="journal article" date="2011" name="Appl. Environ. Microbiol.">
        <title>Genomic potential of Marinobacter aquaeolei, a biogeochemical 'opportunitroph'.</title>
        <authorList>
            <person name="Singer E."/>
            <person name="Webb E.A."/>
            <person name="Nelson W.C."/>
            <person name="Heidelberg J.F."/>
            <person name="Ivanova N."/>
            <person name="Pati A."/>
            <person name="Edwards K.J."/>
        </authorList>
    </citation>
    <scope>NUCLEOTIDE SEQUENCE [LARGE SCALE GENOMIC DNA]</scope>
    <source>
        <strain>ATCC 700491 / DSM 11845 / VT8</strain>
    </source>
</reference>